<name>DEOB_ECO5E</name>
<keyword id="KW-0963">Cytoplasm</keyword>
<keyword id="KW-0413">Isomerase</keyword>
<keyword id="KW-0464">Manganese</keyword>
<keyword id="KW-0479">Metal-binding</keyword>
<sequence length="407" mass="44370">MKRAFIMVLDSFGIGATEDAERFGDVGADTLGHIAEACAKGEADNGRKGPLNLPNLTRLGLAKAHEGSTGFIPAGMDGNAEVIGAYAWAHEMSSGKDTPSGHWEIAGVPVLFEWGYFSDHENSFPQELLDKLVERANLPGYLGNCHSSGTVILDQLGEEHMKTGKPIFYTSADSVFQIACHEETFGLDKLYELCEIAREELTNGGYNIGRVIARPFIGDKAGNFQRTGNRHDLAVEPPAPTVLQKLVDEKHGQVVSVGKIADIYANCGITKKVKATGLDALFDATIKEMKEAGDNTIVFTNFVDFDSSWGHRRDVAGYAAGLELFDRRLPELMSLLRDDDILILTADHGCDPTWTGTDHTREHIPVLVYGPKVKPGSLGHRETFADIGQTLAKYFGTSDMEYGKAMF</sequence>
<evidence type="ECO:0000255" key="1">
    <source>
        <dbReference type="HAMAP-Rule" id="MF_00740"/>
    </source>
</evidence>
<accession>B5Z4R5</accession>
<gene>
    <name evidence="1" type="primary">deoB</name>
    <name type="ordered locus">ECH74115_5898</name>
</gene>
<proteinExistence type="inferred from homology"/>
<reference key="1">
    <citation type="journal article" date="2011" name="Proc. Natl. Acad. Sci. U.S.A.">
        <title>Genomic anatomy of Escherichia coli O157:H7 outbreaks.</title>
        <authorList>
            <person name="Eppinger M."/>
            <person name="Mammel M.K."/>
            <person name="Leclerc J.E."/>
            <person name="Ravel J."/>
            <person name="Cebula T.A."/>
        </authorList>
    </citation>
    <scope>NUCLEOTIDE SEQUENCE [LARGE SCALE GENOMIC DNA]</scope>
    <source>
        <strain>EC4115 / EHEC</strain>
    </source>
</reference>
<dbReference type="EC" id="5.4.2.7" evidence="1"/>
<dbReference type="EMBL" id="CP001164">
    <property type="protein sequence ID" value="ACI38295.1"/>
    <property type="molecule type" value="Genomic_DNA"/>
</dbReference>
<dbReference type="RefSeq" id="WP_000816471.1">
    <property type="nucleotide sequence ID" value="NC_011353.1"/>
</dbReference>
<dbReference type="SMR" id="B5Z4R5"/>
<dbReference type="GeneID" id="89519362"/>
<dbReference type="KEGG" id="ecf:ECH74115_5898"/>
<dbReference type="HOGENOM" id="CLU_053861_0_0_6"/>
<dbReference type="UniPathway" id="UPA00002">
    <property type="reaction ID" value="UER00467"/>
</dbReference>
<dbReference type="GO" id="GO:0005829">
    <property type="term" value="C:cytosol"/>
    <property type="evidence" value="ECO:0007669"/>
    <property type="project" value="TreeGrafter"/>
</dbReference>
<dbReference type="GO" id="GO:0000287">
    <property type="term" value="F:magnesium ion binding"/>
    <property type="evidence" value="ECO:0007669"/>
    <property type="project" value="InterPro"/>
</dbReference>
<dbReference type="GO" id="GO:0030145">
    <property type="term" value="F:manganese ion binding"/>
    <property type="evidence" value="ECO:0007669"/>
    <property type="project" value="UniProtKB-UniRule"/>
</dbReference>
<dbReference type="GO" id="GO:0008973">
    <property type="term" value="F:phosphopentomutase activity"/>
    <property type="evidence" value="ECO:0007669"/>
    <property type="project" value="UniProtKB-UniRule"/>
</dbReference>
<dbReference type="GO" id="GO:0006018">
    <property type="term" value="P:2-deoxyribose 1-phosphate catabolic process"/>
    <property type="evidence" value="ECO:0007669"/>
    <property type="project" value="UniProtKB-UniRule"/>
</dbReference>
<dbReference type="GO" id="GO:0006015">
    <property type="term" value="P:5-phosphoribose 1-diphosphate biosynthetic process"/>
    <property type="evidence" value="ECO:0007669"/>
    <property type="project" value="UniProtKB-UniPathway"/>
</dbReference>
<dbReference type="GO" id="GO:0043094">
    <property type="term" value="P:metabolic compound salvage"/>
    <property type="evidence" value="ECO:0007669"/>
    <property type="project" value="InterPro"/>
</dbReference>
<dbReference type="GO" id="GO:0009117">
    <property type="term" value="P:nucleotide metabolic process"/>
    <property type="evidence" value="ECO:0007669"/>
    <property type="project" value="InterPro"/>
</dbReference>
<dbReference type="CDD" id="cd16009">
    <property type="entry name" value="PPM"/>
    <property type="match status" value="1"/>
</dbReference>
<dbReference type="FunFam" id="3.30.70.1250:FF:000001">
    <property type="entry name" value="Phosphopentomutase"/>
    <property type="match status" value="1"/>
</dbReference>
<dbReference type="Gene3D" id="3.40.720.10">
    <property type="entry name" value="Alkaline Phosphatase, subunit A"/>
    <property type="match status" value="1"/>
</dbReference>
<dbReference type="Gene3D" id="3.30.70.1250">
    <property type="entry name" value="Phosphopentomutase"/>
    <property type="match status" value="1"/>
</dbReference>
<dbReference type="HAMAP" id="MF_00740">
    <property type="entry name" value="Phosphopentomut"/>
    <property type="match status" value="1"/>
</dbReference>
<dbReference type="InterPro" id="IPR017850">
    <property type="entry name" value="Alkaline_phosphatase_core_sf"/>
</dbReference>
<dbReference type="InterPro" id="IPR010045">
    <property type="entry name" value="DeoB"/>
</dbReference>
<dbReference type="InterPro" id="IPR006124">
    <property type="entry name" value="Metalloenzyme"/>
</dbReference>
<dbReference type="InterPro" id="IPR024052">
    <property type="entry name" value="Phosphopentomutase_DeoB_cap_sf"/>
</dbReference>
<dbReference type="NCBIfam" id="TIGR01696">
    <property type="entry name" value="deoB"/>
    <property type="match status" value="1"/>
</dbReference>
<dbReference type="NCBIfam" id="NF003766">
    <property type="entry name" value="PRK05362.1"/>
    <property type="match status" value="1"/>
</dbReference>
<dbReference type="PANTHER" id="PTHR21110">
    <property type="entry name" value="PHOSPHOPENTOMUTASE"/>
    <property type="match status" value="1"/>
</dbReference>
<dbReference type="PANTHER" id="PTHR21110:SF0">
    <property type="entry name" value="PHOSPHOPENTOMUTASE"/>
    <property type="match status" value="1"/>
</dbReference>
<dbReference type="Pfam" id="PF01676">
    <property type="entry name" value="Metalloenzyme"/>
    <property type="match status" value="1"/>
</dbReference>
<dbReference type="PIRSF" id="PIRSF001491">
    <property type="entry name" value="Ppentomutase"/>
    <property type="match status" value="1"/>
</dbReference>
<dbReference type="SUPFAM" id="SSF53649">
    <property type="entry name" value="Alkaline phosphatase-like"/>
    <property type="match status" value="1"/>
</dbReference>
<dbReference type="SUPFAM" id="SSF143856">
    <property type="entry name" value="DeoB insert domain-like"/>
    <property type="match status" value="1"/>
</dbReference>
<comment type="function">
    <text evidence="1">Isomerase that catalyzes the conversion of deoxy-ribose 1-phosphate (dRib-1-P) and ribose 1-phosphate (Rib-1-P) to deoxy-ribose 5-phosphate (dRib-5-P) and ribose 5-phosphate (Rib-5-P), respectively.</text>
</comment>
<comment type="catalytic activity">
    <reaction evidence="1">
        <text>2-deoxy-alpha-D-ribose 1-phosphate = 2-deoxy-D-ribose 5-phosphate</text>
        <dbReference type="Rhea" id="RHEA:27658"/>
        <dbReference type="ChEBI" id="CHEBI:57259"/>
        <dbReference type="ChEBI" id="CHEBI:62877"/>
        <dbReference type="EC" id="5.4.2.7"/>
    </reaction>
</comment>
<comment type="catalytic activity">
    <reaction evidence="1">
        <text>alpha-D-ribose 1-phosphate = D-ribose 5-phosphate</text>
        <dbReference type="Rhea" id="RHEA:18793"/>
        <dbReference type="ChEBI" id="CHEBI:57720"/>
        <dbReference type="ChEBI" id="CHEBI:78346"/>
        <dbReference type="EC" id="5.4.2.7"/>
    </reaction>
</comment>
<comment type="cofactor">
    <cofactor evidence="1">
        <name>Mn(2+)</name>
        <dbReference type="ChEBI" id="CHEBI:29035"/>
    </cofactor>
    <text evidence="1">Binds 2 manganese ions.</text>
</comment>
<comment type="pathway">
    <text evidence="1">Carbohydrate degradation; 2-deoxy-D-ribose 1-phosphate degradation; D-glyceraldehyde 3-phosphate and acetaldehyde from 2-deoxy-alpha-D-ribose 1-phosphate: step 1/2.</text>
</comment>
<comment type="subcellular location">
    <subcellularLocation>
        <location evidence="1">Cytoplasm</location>
    </subcellularLocation>
</comment>
<comment type="similarity">
    <text evidence="1">Belongs to the phosphopentomutase family.</text>
</comment>
<organism>
    <name type="scientific">Escherichia coli O157:H7 (strain EC4115 / EHEC)</name>
    <dbReference type="NCBI Taxonomy" id="444450"/>
    <lineage>
        <taxon>Bacteria</taxon>
        <taxon>Pseudomonadati</taxon>
        <taxon>Pseudomonadota</taxon>
        <taxon>Gammaproteobacteria</taxon>
        <taxon>Enterobacterales</taxon>
        <taxon>Enterobacteriaceae</taxon>
        <taxon>Escherichia</taxon>
    </lineage>
</organism>
<feature type="chain" id="PRO_1000133069" description="Phosphopentomutase">
    <location>
        <begin position="1"/>
        <end position="407"/>
    </location>
</feature>
<feature type="binding site" evidence="1">
    <location>
        <position position="10"/>
    </location>
    <ligand>
        <name>Mn(2+)</name>
        <dbReference type="ChEBI" id="CHEBI:29035"/>
        <label>1</label>
    </ligand>
</feature>
<feature type="binding site" evidence="1">
    <location>
        <position position="306"/>
    </location>
    <ligand>
        <name>Mn(2+)</name>
        <dbReference type="ChEBI" id="CHEBI:29035"/>
        <label>2</label>
    </ligand>
</feature>
<feature type="binding site" evidence="1">
    <location>
        <position position="311"/>
    </location>
    <ligand>
        <name>Mn(2+)</name>
        <dbReference type="ChEBI" id="CHEBI:29035"/>
        <label>2</label>
    </ligand>
</feature>
<feature type="binding site" evidence="1">
    <location>
        <position position="347"/>
    </location>
    <ligand>
        <name>Mn(2+)</name>
        <dbReference type="ChEBI" id="CHEBI:29035"/>
        <label>1</label>
    </ligand>
</feature>
<feature type="binding site" evidence="1">
    <location>
        <position position="348"/>
    </location>
    <ligand>
        <name>Mn(2+)</name>
        <dbReference type="ChEBI" id="CHEBI:29035"/>
        <label>1</label>
    </ligand>
</feature>
<feature type="binding site" evidence="1">
    <location>
        <position position="359"/>
    </location>
    <ligand>
        <name>Mn(2+)</name>
        <dbReference type="ChEBI" id="CHEBI:29035"/>
        <label>2</label>
    </ligand>
</feature>
<protein>
    <recommendedName>
        <fullName evidence="1">Phosphopentomutase</fullName>
        <ecNumber evidence="1">5.4.2.7</ecNumber>
    </recommendedName>
    <alternativeName>
        <fullName evidence="1">Phosphodeoxyribomutase</fullName>
    </alternativeName>
</protein>